<organism>
    <name type="scientific">Rattus norvegicus</name>
    <name type="common">Rat</name>
    <dbReference type="NCBI Taxonomy" id="10116"/>
    <lineage>
        <taxon>Eukaryota</taxon>
        <taxon>Metazoa</taxon>
        <taxon>Chordata</taxon>
        <taxon>Craniata</taxon>
        <taxon>Vertebrata</taxon>
        <taxon>Euteleostomi</taxon>
        <taxon>Mammalia</taxon>
        <taxon>Eutheria</taxon>
        <taxon>Euarchontoglires</taxon>
        <taxon>Glires</taxon>
        <taxon>Rodentia</taxon>
        <taxon>Myomorpha</taxon>
        <taxon>Muroidea</taxon>
        <taxon>Muridae</taxon>
        <taxon>Murinae</taxon>
        <taxon>Rattus</taxon>
    </lineage>
</organism>
<comment type="function">
    <text>Involved in the presentation of foreign antigens to the immune system.</text>
</comment>
<comment type="subunit">
    <text>Heterodimer of an alpha chain and a beta chain (beta-2-microglobulin).</text>
</comment>
<comment type="subcellular location">
    <subcellularLocation>
        <location>Membrane</location>
        <topology>Single-pass type I membrane protein</topology>
    </subcellularLocation>
</comment>
<comment type="similarity">
    <text evidence="4">Belongs to the MHC class I family.</text>
</comment>
<accession>P16391</accession>
<accession>O02940</accession>
<protein>
    <recommendedName>
        <fullName>RT1 class I histocompatibility antigen, AA alpha chain</fullName>
    </recommendedName>
</protein>
<sequence>MEAMAPRTLLLLLAAALAPTQTRAGSHSLRYFYTAVSRPGLGEPRFIAVGYVDDTEFVRFDSDAENPRMEPRARWMEREGPEYWEQQTRIAKEWEQIYRVDLRTLRGYYNQSEGGSHTIQEMYGCDVGSDGSLLRGYRQDAYDGRDYIALNEDLKTWTAADFAAQITRNKWERARYAERLRAYLEGTCVEWLSRYLELGKETLLRSDPPEAHVTLHPRPEGDVTLRCWALGFYPADITLTWQLNGEDLTQDMELVETRPAGDGTFQKWASVVVPLGKEQNYTCRVEHEGLPKPLSQRWEPSPSTDSNMETTVIYVILGAVAMIGAVAIIGAMVAVVRRRKRNTGGKGGDYAPAPGRDSSQSSDVSLPDCKA</sequence>
<keyword id="KW-0002">3D-structure</keyword>
<keyword id="KW-0325">Glycoprotein</keyword>
<keyword id="KW-0391">Immunity</keyword>
<keyword id="KW-0472">Membrane</keyword>
<keyword id="KW-0490">MHC I</keyword>
<keyword id="KW-0597">Phosphoprotein</keyword>
<keyword id="KW-1185">Reference proteome</keyword>
<keyword id="KW-0732">Signal</keyword>
<keyword id="KW-0812">Transmembrane</keyword>
<keyword id="KW-1133">Transmembrane helix</keyword>
<proteinExistence type="evidence at protein level"/>
<reference key="1">
    <citation type="journal article" date="1990" name="Proc. Natl. Acad. Sci. U.S.A.">
        <title>Concerted evolution of class I genes in the major histocompatibility complex of murine rodents.</title>
        <authorList>
            <person name="Rada C."/>
            <person name="Lorenzi R."/>
            <person name="Powis S.J."/>
            <person name="van den Bogaerde J."/>
            <person name="Parham P."/>
            <person name="Howard J.C."/>
        </authorList>
    </citation>
    <scope>NUCLEOTIDE SEQUENCE [MRNA]</scope>
</reference>
<reference key="2">
    <citation type="submission" date="1997-03" db="EMBL/GenBank/DDBJ databases">
        <authorList>
            <person name="Howard J.C."/>
        </authorList>
    </citation>
    <scope>SEQUENCE REVISION</scope>
    <source>
        <strain>DA</strain>
        <tissue>Lymph node</tissue>
        <tissue>Spleen</tissue>
    </source>
</reference>
<reference key="3">
    <citation type="journal article" date="2001" name="Immunity">
        <title>Two different, highly exposed, bulged structures for an unusually long peptide bound to rat MHC class I RT1-A(a).</title>
        <authorList>
            <person name="Speir J.A."/>
            <person name="Stevens J."/>
            <person name="Joly E."/>
            <person name="Butcher G.W."/>
            <person name="Wilson I.A."/>
        </authorList>
    </citation>
    <scope>X-RAY CRYSTALLOGRAPHY (2.55 ANGSTROMS) OF 25-299</scope>
</reference>
<name>HA12_RAT</name>
<evidence type="ECO:0000250" key="1">
    <source>
        <dbReference type="UniProtKB" id="P01900"/>
    </source>
</evidence>
<evidence type="ECO:0000255" key="2"/>
<evidence type="ECO:0000256" key="3">
    <source>
        <dbReference type="SAM" id="MobiDB-lite"/>
    </source>
</evidence>
<evidence type="ECO:0000305" key="4"/>
<evidence type="ECO:0007829" key="5">
    <source>
        <dbReference type="PDB" id="1ED3"/>
    </source>
</evidence>
<evidence type="ECO:0007829" key="6">
    <source>
        <dbReference type="PDB" id="1KJM"/>
    </source>
</evidence>
<evidence type="ECO:0007829" key="7">
    <source>
        <dbReference type="PDB" id="6NF7"/>
    </source>
</evidence>
<feature type="signal peptide" evidence="2">
    <location>
        <begin position="1"/>
        <end position="24"/>
    </location>
</feature>
<feature type="chain" id="PRO_0000018944" description="RT1 class I histocompatibility antigen, AA alpha chain">
    <location>
        <begin position="25"/>
        <end position="371"/>
    </location>
</feature>
<feature type="topological domain" description="Extracellular" evidence="2">
    <location>
        <begin position="25"/>
        <end position="311"/>
    </location>
</feature>
<feature type="transmembrane region" description="Helical" evidence="2">
    <location>
        <begin position="312"/>
        <end position="336"/>
    </location>
</feature>
<feature type="topological domain" description="Cytoplasmic">
    <location>
        <begin position="337"/>
        <end position="371"/>
    </location>
</feature>
<feature type="domain" description="Ig-like C1-type">
    <location>
        <begin position="209"/>
        <end position="295"/>
    </location>
</feature>
<feature type="region of interest" description="Alpha-1">
    <location>
        <begin position="25"/>
        <end position="114"/>
    </location>
</feature>
<feature type="region of interest" description="Alpha-2">
    <location>
        <begin position="115"/>
        <end position="206"/>
    </location>
</feature>
<feature type="region of interest" description="Alpha-3">
    <location>
        <begin position="207"/>
        <end position="298"/>
    </location>
</feature>
<feature type="region of interest" description="Connecting peptide">
    <location>
        <begin position="299"/>
        <end position="311"/>
    </location>
</feature>
<feature type="region of interest" description="Disordered" evidence="3">
    <location>
        <begin position="342"/>
        <end position="371"/>
    </location>
</feature>
<feature type="modified residue" description="Phosphoserine" evidence="1">
    <location>
        <position position="362"/>
    </location>
</feature>
<feature type="modified residue" description="Phosphoserine" evidence="1">
    <location>
        <position position="365"/>
    </location>
</feature>
<feature type="glycosylation site" description="N-linked (GlcNAc...) asparagine" evidence="2">
    <location>
        <position position="110"/>
    </location>
</feature>
<feature type="glycosylation site" description="N-linked (GlcNAc...) asparagine" evidence="2">
    <location>
        <position position="280"/>
    </location>
</feature>
<feature type="strand" evidence="6">
    <location>
        <begin position="26"/>
        <end position="36"/>
    </location>
</feature>
<feature type="strand" evidence="6">
    <location>
        <begin position="41"/>
        <end position="43"/>
    </location>
</feature>
<feature type="strand" evidence="6">
    <location>
        <begin position="45"/>
        <end position="52"/>
    </location>
</feature>
<feature type="strand" evidence="6">
    <location>
        <begin position="55"/>
        <end position="61"/>
    </location>
</feature>
<feature type="strand" evidence="6">
    <location>
        <begin position="64"/>
        <end position="66"/>
    </location>
</feature>
<feature type="helix" evidence="6">
    <location>
        <begin position="74"/>
        <end position="76"/>
    </location>
</feature>
<feature type="strand" evidence="5">
    <location>
        <begin position="77"/>
        <end position="79"/>
    </location>
</feature>
<feature type="helix" evidence="6">
    <location>
        <begin position="81"/>
        <end position="108"/>
    </location>
</feature>
<feature type="strand" evidence="5">
    <location>
        <begin position="113"/>
        <end position="115"/>
    </location>
</feature>
<feature type="strand" evidence="6">
    <location>
        <begin position="118"/>
        <end position="128"/>
    </location>
</feature>
<feature type="strand" evidence="6">
    <location>
        <begin position="133"/>
        <end position="142"/>
    </location>
</feature>
<feature type="strand" evidence="6">
    <location>
        <begin position="145"/>
        <end position="150"/>
    </location>
</feature>
<feature type="strand" evidence="6">
    <location>
        <begin position="157"/>
        <end position="162"/>
    </location>
</feature>
<feature type="helix" evidence="6">
    <location>
        <begin position="163"/>
        <end position="173"/>
    </location>
</feature>
<feature type="helix" evidence="6">
    <location>
        <begin position="176"/>
        <end position="185"/>
    </location>
</feature>
<feature type="helix" evidence="6">
    <location>
        <begin position="187"/>
        <end position="198"/>
    </location>
</feature>
<feature type="helix" evidence="6">
    <location>
        <begin position="200"/>
        <end position="203"/>
    </location>
</feature>
<feature type="strand" evidence="6">
    <location>
        <begin position="210"/>
        <end position="217"/>
    </location>
</feature>
<feature type="strand" evidence="6">
    <location>
        <begin position="221"/>
        <end position="235"/>
    </location>
</feature>
<feature type="strand" evidence="6">
    <location>
        <begin position="238"/>
        <end position="243"/>
    </location>
</feature>
<feature type="turn" evidence="5">
    <location>
        <begin position="248"/>
        <end position="251"/>
    </location>
</feature>
<feature type="strand" evidence="6">
    <location>
        <begin position="261"/>
        <end position="263"/>
    </location>
</feature>
<feature type="strand" evidence="6">
    <location>
        <begin position="265"/>
        <end position="273"/>
    </location>
</feature>
<feature type="helix" evidence="6">
    <location>
        <begin position="278"/>
        <end position="280"/>
    </location>
</feature>
<feature type="strand" evidence="6">
    <location>
        <begin position="281"/>
        <end position="285"/>
    </location>
</feature>
<feature type="strand" evidence="7">
    <location>
        <begin position="290"/>
        <end position="292"/>
    </location>
</feature>
<feature type="strand" evidence="6">
    <location>
        <begin position="294"/>
        <end position="296"/>
    </location>
</feature>
<dbReference type="EMBL" id="M31018">
    <property type="protein sequence ID" value="AAB49324.1"/>
    <property type="molecule type" value="mRNA"/>
</dbReference>
<dbReference type="PIR" id="A35090">
    <property type="entry name" value="A35090"/>
</dbReference>
<dbReference type="PDB" id="1ED3">
    <property type="method" value="X-ray"/>
    <property type="resolution" value="2.55 A"/>
    <property type="chains" value="A/D=25-299"/>
</dbReference>
<dbReference type="PDB" id="1KJM">
    <property type="method" value="X-ray"/>
    <property type="resolution" value="2.35 A"/>
    <property type="chains" value="A=25-300"/>
</dbReference>
<dbReference type="PDB" id="6NF7">
    <property type="method" value="X-ray"/>
    <property type="resolution" value="2.90 A"/>
    <property type="chains" value="A/D/G/J/M=25-299"/>
</dbReference>
<dbReference type="PDBsum" id="1ED3"/>
<dbReference type="PDBsum" id="1KJM"/>
<dbReference type="PDBsum" id="6NF7"/>
<dbReference type="SMR" id="P16391"/>
<dbReference type="FunCoup" id="P16391">
    <property type="interactions" value="186"/>
</dbReference>
<dbReference type="MINT" id="P16391"/>
<dbReference type="STRING" id="10116.ENSRNOP00000050701"/>
<dbReference type="GlyGen" id="P16391">
    <property type="glycosylation" value="2 sites"/>
</dbReference>
<dbReference type="jPOST" id="P16391"/>
<dbReference type="AGR" id="RGD:2300147"/>
<dbReference type="InParanoid" id="P16391"/>
<dbReference type="EvolutionaryTrace" id="P16391"/>
<dbReference type="Proteomes" id="UP000002494">
    <property type="component" value="Unplaced"/>
</dbReference>
<dbReference type="GO" id="GO:0009897">
    <property type="term" value="C:external side of plasma membrane"/>
    <property type="evidence" value="ECO:0000318"/>
    <property type="project" value="GO_Central"/>
</dbReference>
<dbReference type="GO" id="GO:0005615">
    <property type="term" value="C:extracellular space"/>
    <property type="evidence" value="ECO:0000318"/>
    <property type="project" value="GO_Central"/>
</dbReference>
<dbReference type="GO" id="GO:0098553">
    <property type="term" value="C:lumenal side of endoplasmic reticulum membrane"/>
    <property type="evidence" value="ECO:0007669"/>
    <property type="project" value="UniProtKB-ARBA"/>
</dbReference>
<dbReference type="GO" id="GO:0042612">
    <property type="term" value="C:MHC class I protein complex"/>
    <property type="evidence" value="ECO:0007669"/>
    <property type="project" value="UniProtKB-KW"/>
</dbReference>
<dbReference type="GO" id="GO:0030670">
    <property type="term" value="C:phagocytic vesicle membrane"/>
    <property type="evidence" value="ECO:0007669"/>
    <property type="project" value="UniProtKB-ARBA"/>
</dbReference>
<dbReference type="GO" id="GO:0042605">
    <property type="term" value="F:peptide antigen binding"/>
    <property type="evidence" value="ECO:0000318"/>
    <property type="project" value="GO_Central"/>
</dbReference>
<dbReference type="GO" id="GO:0005102">
    <property type="term" value="F:signaling receptor binding"/>
    <property type="evidence" value="ECO:0000318"/>
    <property type="project" value="GO_Central"/>
</dbReference>
<dbReference type="GO" id="GO:0002486">
    <property type="term" value="P:antigen processing and presentation of endogenous peptide antigen via MHC class I via ER pathway, TAP-independent"/>
    <property type="evidence" value="ECO:0000318"/>
    <property type="project" value="GO_Central"/>
</dbReference>
<dbReference type="GO" id="GO:0002476">
    <property type="term" value="P:antigen processing and presentation of endogenous peptide antigen via MHC class Ib"/>
    <property type="evidence" value="ECO:0000318"/>
    <property type="project" value="GO_Central"/>
</dbReference>
<dbReference type="GO" id="GO:0006955">
    <property type="term" value="P:immune response"/>
    <property type="evidence" value="ECO:0000318"/>
    <property type="project" value="GO_Central"/>
</dbReference>
<dbReference type="GO" id="GO:0001916">
    <property type="term" value="P:positive regulation of T cell mediated cytotoxicity"/>
    <property type="evidence" value="ECO:0000318"/>
    <property type="project" value="GO_Central"/>
</dbReference>
<dbReference type="CDD" id="cd21015">
    <property type="entry name" value="IgC1_MHC_Ia_RT1-Aa"/>
    <property type="match status" value="1"/>
</dbReference>
<dbReference type="FunFam" id="2.60.40.10:FF:000014">
    <property type="entry name" value="H-2 class I histocompatibility antigen, alpha chain"/>
    <property type="match status" value="1"/>
</dbReference>
<dbReference type="FunFam" id="3.30.500.10:FF:000001">
    <property type="entry name" value="H-2 class I histocompatibility antigen, alpha chain"/>
    <property type="match status" value="1"/>
</dbReference>
<dbReference type="Gene3D" id="2.60.40.10">
    <property type="entry name" value="Immunoglobulins"/>
    <property type="match status" value="1"/>
</dbReference>
<dbReference type="Gene3D" id="3.30.500.10">
    <property type="entry name" value="MHC class I-like antigen recognition-like"/>
    <property type="match status" value="1"/>
</dbReference>
<dbReference type="InterPro" id="IPR007110">
    <property type="entry name" value="Ig-like_dom"/>
</dbReference>
<dbReference type="InterPro" id="IPR036179">
    <property type="entry name" value="Ig-like_dom_sf"/>
</dbReference>
<dbReference type="InterPro" id="IPR013783">
    <property type="entry name" value="Ig-like_fold"/>
</dbReference>
<dbReference type="InterPro" id="IPR003006">
    <property type="entry name" value="Ig/MHC_CS"/>
</dbReference>
<dbReference type="InterPro" id="IPR003597">
    <property type="entry name" value="Ig_C1-set"/>
</dbReference>
<dbReference type="InterPro" id="IPR050208">
    <property type="entry name" value="MHC_class-I_related"/>
</dbReference>
<dbReference type="InterPro" id="IPR011161">
    <property type="entry name" value="MHC_I-like_Ag-recog"/>
</dbReference>
<dbReference type="InterPro" id="IPR037055">
    <property type="entry name" value="MHC_I-like_Ag-recog_sf"/>
</dbReference>
<dbReference type="InterPro" id="IPR011162">
    <property type="entry name" value="MHC_I/II-like_Ag-recog"/>
</dbReference>
<dbReference type="InterPro" id="IPR001039">
    <property type="entry name" value="MHC_I_a_a1/a2"/>
</dbReference>
<dbReference type="InterPro" id="IPR010579">
    <property type="entry name" value="MHC_I_a_C"/>
</dbReference>
<dbReference type="PANTHER" id="PTHR16675:SF251">
    <property type="entry name" value="HLA CLASS I HISTOCOMPATIBILITY ANTIGEN, C ALPHA CHAIN"/>
    <property type="match status" value="1"/>
</dbReference>
<dbReference type="PANTHER" id="PTHR16675">
    <property type="entry name" value="MHC CLASS I-RELATED"/>
    <property type="match status" value="1"/>
</dbReference>
<dbReference type="Pfam" id="PF07654">
    <property type="entry name" value="C1-set"/>
    <property type="match status" value="1"/>
</dbReference>
<dbReference type="Pfam" id="PF00129">
    <property type="entry name" value="MHC_I"/>
    <property type="match status" value="1"/>
</dbReference>
<dbReference type="Pfam" id="PF06623">
    <property type="entry name" value="MHC_I_C"/>
    <property type="match status" value="1"/>
</dbReference>
<dbReference type="PRINTS" id="PR01638">
    <property type="entry name" value="MHCCLASSI"/>
</dbReference>
<dbReference type="SMART" id="SM00407">
    <property type="entry name" value="IGc1"/>
    <property type="match status" value="1"/>
</dbReference>
<dbReference type="SUPFAM" id="SSF48726">
    <property type="entry name" value="Immunoglobulin"/>
    <property type="match status" value="1"/>
</dbReference>
<dbReference type="SUPFAM" id="SSF54452">
    <property type="entry name" value="MHC antigen-recognition domain"/>
    <property type="match status" value="1"/>
</dbReference>
<dbReference type="PROSITE" id="PS50835">
    <property type="entry name" value="IG_LIKE"/>
    <property type="match status" value="1"/>
</dbReference>
<dbReference type="PROSITE" id="PS00290">
    <property type="entry name" value="IG_MHC"/>
    <property type="match status" value="1"/>
</dbReference>